<comment type="function">
    <text evidence="1 2">E3 ubiquitin-protein ligase that plays a key role in DNA damage signaling via 2 distinct roles: by mediating the 'Lys-63'-linked ubiquitination of histones H2A and H2AX and promoting the recruitment of DNA repair proteins at double-strand breaks (DSBs) sites, and by catalyzing 'Lys-48'-linked ubiquitination to remove target proteins from DNA damage sites. Following DNA DSBs, it is recruited to the sites of damage by ATM-phosphorylated MDC1 and catalyzes the 'Lys-63'-linked ubiquitination of histones H2A and H2AX, thereby promoting the formation of TP53BP1 and BRCA1 ionizing radiation-induced foci (IRIF). Also controls the recruitment of UIMC1-BRCC3 (RAP80-BRCC36) and PAXIP1/PTIP to DNA damage sites. Promotes the recruitment of NBN to DNA damage sites by catalyzing 'Lys-6'-linked ubiquitination of NBN. Also recruited at DNA interstrand cross-links (ICLs) sites and catalyzes 'Lys-63'-linked ubiquitination of histones H2A and H2AX, leading to recruitment of FAAP20 and Fanconi anemia (FA) complex, followed by interstrand cross-link repair. H2A ubiquitination also mediates the ATM-dependent transcriptional silencing at regions flanking DSBs in cis, a mechanism to avoid collision between transcription and repair intermediates. Promotes the formation of 'Lys-63'-linked polyubiquitin chains via interactions with the specific ubiquitin-conjugating UBE2N/UBC13 and ubiquitinates non-histone substrates such as PCNA. Substrates that are polyubiquitinated at 'Lys-63' are usually not targeted for degradation. Also catalyzes the formation of 'Lys-48'-linked polyubiquitin chains via interaction with the ubiquitin-conjugating UBE2L6/UBCH8, leading to degradation of substrate proteins such as CHEK2, JMJD2A/KDM4A and KU80/XRCC5: it is still unclear how the preference toward 'Lys-48'- versus 'Lys-63'-linked ubiquitination is regulated but it could be due to RNF8 ability to interact with specific E2 specific ligases. For instance, interaction with phosphorylated HERC2 promotes the association between RNF8 and UBE2N/UBC13 and favors the specific formation of 'Lys-63'-linked ubiquitin chains. Promotes non-homologous end joining (NHEJ) by promoting the 'Lys-48'-linked ubiquitination and degradation the of KU80/XRCC5. Following DNA damage, mediates the ubiquitination and degradation of JMJD2A/KDM4A in collaboration with RNF168, leading to unmask H4K20me2 mark and promote the recruitment of TP53BP1 at DNA damage sites (By similarity). Following DNA damage, mediates the ubiquitination and degradation of POLD4/p12, a subunit of DNA polymerase delta. In the absence of POLD4, DNA polymerase delta complex exhibits higher proofreading activity (By similarity). In addition to its function in damage signaling, also plays a role in higher-order chromatin structure by mediating extensive chromatin decondensation. Involved in the activation of ATM by promoting histone H2B ubiquitination, which indirectly triggers histone H4 'Lys-16' acetylation (H4K16ac), establishing a chromatin environment that promotes efficient activation of ATM kinase. Required in the testis, where it plays a role in the replacement of histones during spermatogenesis. At uncapped telomeres, promotes the joining of deprotected chromosome ends by inducing H2A ubiquitination and TP53BP1 recruitment, suggesting that it may enhance cancer development by aggravating telomere-induced genome instability in case of telomeric crisis. Promotes the assembly of RAD51 at DNA DSBs in the absence of BRCA1 and TP53BP1 Also involved in class switch recombination in immune system, via its role in regulation of DSBs repair. May be required for proper exit from mitosis after spindle checkpoint activation and may regulate cytokinesis. May play a role in the regulation of RXRA-mediated transcriptional activity. Not involved in RXRA ubiquitination by UBE2E2 (By similarity).</text>
</comment>
<comment type="catalytic activity">
    <reaction evidence="2">
        <text>S-ubiquitinyl-[E2 ubiquitin-conjugating enzyme]-L-cysteine + [acceptor protein]-L-lysine = [E2 ubiquitin-conjugating enzyme]-L-cysteine + N(6)-ubiquitinyl-[acceptor protein]-L-lysine.</text>
        <dbReference type="EC" id="2.3.2.27"/>
    </reaction>
</comment>
<comment type="pathway">
    <text evidence="2">Protein modification; protein ubiquitination.</text>
</comment>
<comment type="subunit">
    <text evidence="2">Homodimer. Forms a E2-E3 ubiquitin ligase complex composed of the RNF8 homodimer and a E2 heterodimer of UBE2N and UBE2V2. Interacts with class III E2s, including UBE2E1, UBE2E2, and UBE2E3 and with UBE2N. Interacts with RXRA. Interacts (via FHA domain) with phosphorylated HERC2 (via C-terminus). Interacts with PIWIL1; leading to sequester RNF8 in the cytoplasm. Interacts with WRAP53/TCAB1.</text>
</comment>
<comment type="subcellular location">
    <subcellularLocation>
        <location evidence="2">Nucleus</location>
    </subcellularLocation>
    <subcellularLocation>
        <location evidence="2">Cytoplasm</location>
    </subcellularLocation>
    <subcellularLocation>
        <location evidence="2">Midbody</location>
    </subcellularLocation>
    <subcellularLocation>
        <location evidence="2">Chromosome</location>
        <location evidence="2">Telomere</location>
    </subcellularLocation>
    <text evidence="2">Recruited at uncapped telomeres. Following DNA double-strand breaks, recruited to the sites of damage. During prophase, concomitant with nuclear envelope breakdown, localizes throughout the cell, with a dotted pattern. In telophase, again in the nucleus and also with a discrete dotted pattern in the cytoplasm. In late telophase and during cytokinesis, localizes in the midbody of the tubulin bridge joining the daughter cells. Does not seem to be associated with condensed chromosomes at any time during the cell cycle. During spermatogenesis, sequestered in the cytoplasm by PIWIL1: RNF8 is released following ubiquitination and degradation of PIWIL1.</text>
</comment>
<comment type="domain">
    <text evidence="1 2">The FHA domain specifically recognizes and binds ATM-phosphorylated MDC1 and phosphorylated HERC2 (By similarity). This domain is also required for proper recruitment to DNA damage sites after UV irradiation, ionizing radiation, or treatment with an alkylating agent (By similarity).</text>
</comment>
<comment type="PTM">
    <text evidence="2">Autoubiquitinated through 'Lys-48' and 'Lys-63' of ubiquitin. 'Lys-63' polyubiquitination is mediated by UBE2N. 'Lys-29'-type polyubiquitination is also observed, but it doesn't require its own functional RING-type zinc finger.</text>
</comment>
<comment type="similarity">
    <text evidence="2">Belongs to the RNF8 family.</text>
</comment>
<comment type="caution">
    <text evidence="2">According to a well-established model, RNF8 initiate H2A 'Lys-63'-linked ubiquitination leading to recruitment of RNF168 to amplify H2A 'Lys-63'-linked ubiquitination. However, other data suggest that RNF168 is the priming ubiquitin ligase by mediating monoubiquitination of 'Lys-13' and 'Lys-15' of nucleosomal histone H2A (H2AK13Ub and H2AK15Ub respectively). These data suggest that RNF168 might be recruited to DSBs sites in a RNF8-dependent manner by binding to non-histone proteins ubiquitinated via 'Lys-63'-linked and initiates monoubiquitination of H2A, which is then amplified by RNF8. Additional evidence is however required to confirm these data.</text>
</comment>
<evidence type="ECO:0000250" key="1">
    <source>
        <dbReference type="UniProtKB" id="O76064"/>
    </source>
</evidence>
<evidence type="ECO:0000255" key="2">
    <source>
        <dbReference type="HAMAP-Rule" id="MF_03067"/>
    </source>
</evidence>
<evidence type="ECO:0000256" key="3">
    <source>
        <dbReference type="SAM" id="MobiDB-lite"/>
    </source>
</evidence>
<accession>Q2HJ46</accession>
<proteinExistence type="evidence at transcript level"/>
<keyword id="KW-0131">Cell cycle</keyword>
<keyword id="KW-0132">Cell division</keyword>
<keyword id="KW-0156">Chromatin regulator</keyword>
<keyword id="KW-0158">Chromosome</keyword>
<keyword id="KW-0963">Cytoplasm</keyword>
<keyword id="KW-0227">DNA damage</keyword>
<keyword id="KW-0234">DNA repair</keyword>
<keyword id="KW-0479">Metal-binding</keyword>
<keyword id="KW-0498">Mitosis</keyword>
<keyword id="KW-0539">Nucleus</keyword>
<keyword id="KW-0597">Phosphoprotein</keyword>
<keyword id="KW-1185">Reference proteome</keyword>
<keyword id="KW-0779">Telomere</keyword>
<keyword id="KW-0808">Transferase</keyword>
<keyword id="KW-0832">Ubl conjugation</keyword>
<keyword id="KW-0833">Ubl conjugation pathway</keyword>
<keyword id="KW-0862">Zinc</keyword>
<keyword id="KW-0863">Zinc-finger</keyword>
<name>RNF8_BOVIN</name>
<dbReference type="EC" id="2.3.2.27" evidence="2"/>
<dbReference type="EMBL" id="BC113317">
    <property type="protein sequence ID" value="AAI13318.1"/>
    <property type="molecule type" value="mRNA"/>
</dbReference>
<dbReference type="RefSeq" id="NP_001039681.1">
    <property type="nucleotide sequence ID" value="NM_001046216.1"/>
</dbReference>
<dbReference type="SMR" id="Q2HJ46"/>
<dbReference type="FunCoup" id="Q2HJ46">
    <property type="interactions" value="2653"/>
</dbReference>
<dbReference type="STRING" id="9913.ENSBTAP00000073216"/>
<dbReference type="PaxDb" id="9913-ENSBTAP00000010959"/>
<dbReference type="Ensembl" id="ENSBTAT00000093085.1">
    <property type="protein sequence ID" value="ENSBTAP00000095665.1"/>
    <property type="gene ID" value="ENSBTAG00000008321.6"/>
</dbReference>
<dbReference type="GeneID" id="515933"/>
<dbReference type="KEGG" id="bta:515933"/>
<dbReference type="CTD" id="9025"/>
<dbReference type="VEuPathDB" id="HostDB:ENSBTAG00000008321"/>
<dbReference type="VGNC" id="VGNC:34073">
    <property type="gene designation" value="RNF8"/>
</dbReference>
<dbReference type="eggNOG" id="KOG3872">
    <property type="taxonomic scope" value="Eukaryota"/>
</dbReference>
<dbReference type="GeneTree" id="ENSGT00400000022349"/>
<dbReference type="HOGENOM" id="CLU_023453_1_0_1"/>
<dbReference type="InParanoid" id="Q2HJ46"/>
<dbReference type="OrthoDB" id="5330228at2759"/>
<dbReference type="TreeFam" id="TF330957"/>
<dbReference type="Reactome" id="R-BTA-5693565">
    <property type="pathway name" value="Recruitment and ATM-mediated phosphorylation of repair and signaling proteins at DNA double strand breaks"/>
</dbReference>
<dbReference type="Reactome" id="R-BTA-5693571">
    <property type="pathway name" value="Nonhomologous End-Joining (NHEJ)"/>
</dbReference>
<dbReference type="Reactome" id="R-BTA-5693607">
    <property type="pathway name" value="Processing of DNA double-strand break ends"/>
</dbReference>
<dbReference type="Reactome" id="R-BTA-69473">
    <property type="pathway name" value="G2/M DNA damage checkpoint"/>
</dbReference>
<dbReference type="UniPathway" id="UPA00143"/>
<dbReference type="Proteomes" id="UP000009136">
    <property type="component" value="Chromosome 23"/>
</dbReference>
<dbReference type="Bgee" id="ENSBTAG00000008321">
    <property type="expression patterns" value="Expressed in oocyte and 108 other cell types or tissues"/>
</dbReference>
<dbReference type="GO" id="GO:0000781">
    <property type="term" value="C:chromosome, telomeric region"/>
    <property type="evidence" value="ECO:0000250"/>
    <property type="project" value="UniProtKB"/>
</dbReference>
<dbReference type="GO" id="GO:0005737">
    <property type="term" value="C:cytoplasm"/>
    <property type="evidence" value="ECO:0000250"/>
    <property type="project" value="UniProtKB"/>
</dbReference>
<dbReference type="GO" id="GO:0005829">
    <property type="term" value="C:cytosol"/>
    <property type="evidence" value="ECO:0000318"/>
    <property type="project" value="GO_Central"/>
</dbReference>
<dbReference type="GO" id="GO:0030496">
    <property type="term" value="C:midbody"/>
    <property type="evidence" value="ECO:0007669"/>
    <property type="project" value="UniProtKB-SubCell"/>
</dbReference>
<dbReference type="GO" id="GO:0005634">
    <property type="term" value="C:nucleus"/>
    <property type="evidence" value="ECO:0000250"/>
    <property type="project" value="UniProtKB"/>
</dbReference>
<dbReference type="GO" id="GO:0035861">
    <property type="term" value="C:site of double-strand break"/>
    <property type="evidence" value="ECO:0000250"/>
    <property type="project" value="UniProtKB"/>
</dbReference>
<dbReference type="GO" id="GO:0000151">
    <property type="term" value="C:ubiquitin ligase complex"/>
    <property type="evidence" value="ECO:0000250"/>
    <property type="project" value="UniProtKB"/>
</dbReference>
<dbReference type="GO" id="GO:0003682">
    <property type="term" value="F:chromatin binding"/>
    <property type="evidence" value="ECO:0000250"/>
    <property type="project" value="UniProtKB"/>
</dbReference>
<dbReference type="GO" id="GO:0042393">
    <property type="term" value="F:histone binding"/>
    <property type="evidence" value="ECO:0000250"/>
    <property type="project" value="UniProtKB"/>
</dbReference>
<dbReference type="GO" id="GO:0042803">
    <property type="term" value="F:protein homodimerization activity"/>
    <property type="evidence" value="ECO:0000250"/>
    <property type="project" value="UniProtKB"/>
</dbReference>
<dbReference type="GO" id="GO:0043130">
    <property type="term" value="F:ubiquitin binding"/>
    <property type="evidence" value="ECO:0007669"/>
    <property type="project" value="UniProtKB-UniRule"/>
</dbReference>
<dbReference type="GO" id="GO:0061630">
    <property type="term" value="F:ubiquitin protein ligase activity"/>
    <property type="evidence" value="ECO:0000250"/>
    <property type="project" value="UniProtKB"/>
</dbReference>
<dbReference type="GO" id="GO:0008270">
    <property type="term" value="F:zinc ion binding"/>
    <property type="evidence" value="ECO:0000250"/>
    <property type="project" value="UniProtKB"/>
</dbReference>
<dbReference type="GO" id="GO:0051301">
    <property type="term" value="P:cell division"/>
    <property type="evidence" value="ECO:0007669"/>
    <property type="project" value="UniProtKB-KW"/>
</dbReference>
<dbReference type="GO" id="GO:0006974">
    <property type="term" value="P:DNA damage response"/>
    <property type="evidence" value="ECO:0000250"/>
    <property type="project" value="UniProtKB"/>
</dbReference>
<dbReference type="GO" id="GO:0140861">
    <property type="term" value="P:DNA repair-dependent chromatin remodeling"/>
    <property type="evidence" value="ECO:0000250"/>
    <property type="project" value="UniProtKB"/>
</dbReference>
<dbReference type="GO" id="GO:0006302">
    <property type="term" value="P:double-strand break repair"/>
    <property type="evidence" value="ECO:0000250"/>
    <property type="project" value="UniProtKB"/>
</dbReference>
<dbReference type="GO" id="GO:0006303">
    <property type="term" value="P:double-strand break repair via nonhomologous end joining"/>
    <property type="evidence" value="ECO:0000250"/>
    <property type="project" value="UniProtKB"/>
</dbReference>
<dbReference type="GO" id="GO:0040029">
    <property type="term" value="P:epigenetic regulation of gene expression"/>
    <property type="evidence" value="ECO:0000250"/>
    <property type="project" value="UniProtKB"/>
</dbReference>
<dbReference type="GO" id="GO:0045190">
    <property type="term" value="P:isotype switching"/>
    <property type="evidence" value="ECO:0000250"/>
    <property type="project" value="UniProtKB"/>
</dbReference>
<dbReference type="GO" id="GO:0034244">
    <property type="term" value="P:negative regulation of transcription elongation by RNA polymerase II"/>
    <property type="evidence" value="ECO:0000250"/>
    <property type="project" value="UniProtKB"/>
</dbReference>
<dbReference type="GO" id="GO:0045739">
    <property type="term" value="P:positive regulation of DNA repair"/>
    <property type="evidence" value="ECO:0000250"/>
    <property type="project" value="UniProtKB"/>
</dbReference>
<dbReference type="GO" id="GO:1905168">
    <property type="term" value="P:positive regulation of double-strand break repair via homologous recombination"/>
    <property type="evidence" value="ECO:0000250"/>
    <property type="project" value="UniProtKB"/>
</dbReference>
<dbReference type="GO" id="GO:0070936">
    <property type="term" value="P:protein K48-linked ubiquitination"/>
    <property type="evidence" value="ECO:0000250"/>
    <property type="project" value="UniProtKB"/>
</dbReference>
<dbReference type="GO" id="GO:0085020">
    <property type="term" value="P:protein K6-linked ubiquitination"/>
    <property type="evidence" value="ECO:0000250"/>
    <property type="project" value="UniProtKB"/>
</dbReference>
<dbReference type="GO" id="GO:0070534">
    <property type="term" value="P:protein K63-linked ubiquitination"/>
    <property type="evidence" value="ECO:0000250"/>
    <property type="project" value="UniProtKB"/>
</dbReference>
<dbReference type="GO" id="GO:0010212">
    <property type="term" value="P:response to ionizing radiation"/>
    <property type="evidence" value="ECO:0000250"/>
    <property type="project" value="UniProtKB"/>
</dbReference>
<dbReference type="GO" id="GO:0035092">
    <property type="term" value="P:sperm DNA condensation"/>
    <property type="evidence" value="ECO:0000250"/>
    <property type="project" value="UniProtKB"/>
</dbReference>
<dbReference type="GO" id="GO:0006511">
    <property type="term" value="P:ubiquitin-dependent protein catabolic process"/>
    <property type="evidence" value="ECO:0000250"/>
    <property type="project" value="UniProtKB"/>
</dbReference>
<dbReference type="CDD" id="cd22663">
    <property type="entry name" value="FHA_RNF8"/>
    <property type="match status" value="1"/>
</dbReference>
<dbReference type="CDD" id="cd16535">
    <property type="entry name" value="RING-HC_RNF8"/>
    <property type="match status" value="1"/>
</dbReference>
<dbReference type="FunFam" id="1.20.5.170:FF:000050">
    <property type="entry name" value="E3 ubiquitin-protein ligase RNF8"/>
    <property type="match status" value="1"/>
</dbReference>
<dbReference type="FunFam" id="2.60.200.20:FF:000015">
    <property type="entry name" value="E3 ubiquitin-protein ligase RNF8"/>
    <property type="match status" value="1"/>
</dbReference>
<dbReference type="FunFam" id="3.30.40.10:FF:000242">
    <property type="entry name" value="E3 ubiquitin-protein ligase RNF8"/>
    <property type="match status" value="1"/>
</dbReference>
<dbReference type="Gene3D" id="1.20.5.170">
    <property type="match status" value="1"/>
</dbReference>
<dbReference type="Gene3D" id="2.60.200.20">
    <property type="match status" value="1"/>
</dbReference>
<dbReference type="Gene3D" id="3.30.40.10">
    <property type="entry name" value="Zinc/RING finger domain, C3HC4 (zinc finger)"/>
    <property type="match status" value="1"/>
</dbReference>
<dbReference type="HAMAP" id="MF_03067">
    <property type="entry name" value="RNF8"/>
    <property type="match status" value="1"/>
</dbReference>
<dbReference type="InterPro" id="IPR000253">
    <property type="entry name" value="FHA_dom"/>
</dbReference>
<dbReference type="InterPro" id="IPR017335">
    <property type="entry name" value="RNF8"/>
</dbReference>
<dbReference type="InterPro" id="IPR008984">
    <property type="entry name" value="SMAD_FHA_dom_sf"/>
</dbReference>
<dbReference type="InterPro" id="IPR018957">
    <property type="entry name" value="Znf_C3HC4_RING-type"/>
</dbReference>
<dbReference type="InterPro" id="IPR001841">
    <property type="entry name" value="Znf_RING"/>
</dbReference>
<dbReference type="InterPro" id="IPR013083">
    <property type="entry name" value="Znf_RING/FYVE/PHD"/>
</dbReference>
<dbReference type="InterPro" id="IPR017907">
    <property type="entry name" value="Znf_RING_CS"/>
</dbReference>
<dbReference type="PANTHER" id="PTHR15067">
    <property type="entry name" value="E3 UBIQUITIN-PROTEIN LIGASE RNF8"/>
    <property type="match status" value="1"/>
</dbReference>
<dbReference type="PANTHER" id="PTHR15067:SF4">
    <property type="entry name" value="E3 UBIQUITIN-PROTEIN LIGASE RNF8"/>
    <property type="match status" value="1"/>
</dbReference>
<dbReference type="Pfam" id="PF00498">
    <property type="entry name" value="FHA"/>
    <property type="match status" value="1"/>
</dbReference>
<dbReference type="Pfam" id="PF00097">
    <property type="entry name" value="zf-C3HC4"/>
    <property type="match status" value="1"/>
</dbReference>
<dbReference type="PIRSF" id="PIRSF037950">
    <property type="entry name" value="E3_ubiquit_lig_RNF8"/>
    <property type="match status" value="1"/>
</dbReference>
<dbReference type="SMART" id="SM00240">
    <property type="entry name" value="FHA"/>
    <property type="match status" value="1"/>
</dbReference>
<dbReference type="SMART" id="SM00184">
    <property type="entry name" value="RING"/>
    <property type="match status" value="1"/>
</dbReference>
<dbReference type="SUPFAM" id="SSF57850">
    <property type="entry name" value="RING/U-box"/>
    <property type="match status" value="1"/>
</dbReference>
<dbReference type="SUPFAM" id="SSF49879">
    <property type="entry name" value="SMAD/FHA domain"/>
    <property type="match status" value="1"/>
</dbReference>
<dbReference type="PROSITE" id="PS50006">
    <property type="entry name" value="FHA_DOMAIN"/>
    <property type="match status" value="1"/>
</dbReference>
<dbReference type="PROSITE" id="PS00518">
    <property type="entry name" value="ZF_RING_1"/>
    <property type="match status" value="1"/>
</dbReference>
<dbReference type="PROSITE" id="PS50089">
    <property type="entry name" value="ZF_RING_2"/>
    <property type="match status" value="1"/>
</dbReference>
<sequence length="487" mass="55729">MGDPGSLVTEGRAGERSWCLRRVGMNTEWLLLEDGNEVTVGRGFGVTYQLVSKICPLMISRNHCILKQNAEGQWTIKDNKSLNGVWLNRERLEPLKVYSIHKGDHIQLGVPLENKENAEYEYEVTEEDWERIYPCLSPKSDQMMEKNKGLRTKRKFSLDELEGSGAEGPSNLKSKISKLSCEPGQQVKSHGKGKVASQPSEYLDPKLTSFEPSVKTTGAHVNPGPAKVIELLRKKKKASNPSASQSSLELFKVTMSRILMLKTQMQEKQVAVLNVKKQTKKGSSKKIVKMEQELQDLQSQLCAEQAQQQARVEQLEKTIQEEQQHLEGLEKEEGEEDLKQQLAQALQEYRSLVEELNRSKKNFEAIIQAKDKELEQTKEEKEKVQAQKEEVLSHMNDVLENELQCIICSEYFVEAVTLNCAHSFCSYCINEWMKRKVECPICRKDIKSKTRSLVLDNCISKMVDNLNSEVKERRIVLIRERKGKRLF</sequence>
<feature type="chain" id="PRO_0000269199" description="E3 ubiquitin-protein ligase RNF8">
    <location>
        <begin position="1"/>
        <end position="487"/>
    </location>
</feature>
<feature type="domain" description="FHA" evidence="2">
    <location>
        <begin position="38"/>
        <end position="92"/>
    </location>
</feature>
<feature type="zinc finger region" description="RING-type" evidence="2">
    <location>
        <begin position="405"/>
        <end position="443"/>
    </location>
</feature>
<feature type="region of interest" description="Required for interaction with PIWIL1" evidence="2">
    <location>
        <begin position="68"/>
        <end position="72"/>
    </location>
</feature>
<feature type="region of interest" description="Disordered" evidence="3">
    <location>
        <begin position="143"/>
        <end position="176"/>
    </location>
</feature>
<feature type="region of interest" description="Disordered" evidence="3">
    <location>
        <begin position="182"/>
        <end position="201"/>
    </location>
</feature>
<feature type="modified residue" description="Phosphoserine" evidence="1">
    <location>
        <position position="157"/>
    </location>
</feature>
<reference key="1">
    <citation type="submission" date="2006-02" db="EMBL/GenBank/DDBJ databases">
        <authorList>
            <consortium name="NIH - Mammalian Gene Collection (MGC) project"/>
        </authorList>
    </citation>
    <scope>NUCLEOTIDE SEQUENCE [LARGE SCALE MRNA]</scope>
    <source>
        <strain>Hereford</strain>
        <tissue>Uterus</tissue>
    </source>
</reference>
<organism>
    <name type="scientific">Bos taurus</name>
    <name type="common">Bovine</name>
    <dbReference type="NCBI Taxonomy" id="9913"/>
    <lineage>
        <taxon>Eukaryota</taxon>
        <taxon>Metazoa</taxon>
        <taxon>Chordata</taxon>
        <taxon>Craniata</taxon>
        <taxon>Vertebrata</taxon>
        <taxon>Euteleostomi</taxon>
        <taxon>Mammalia</taxon>
        <taxon>Eutheria</taxon>
        <taxon>Laurasiatheria</taxon>
        <taxon>Artiodactyla</taxon>
        <taxon>Ruminantia</taxon>
        <taxon>Pecora</taxon>
        <taxon>Bovidae</taxon>
        <taxon>Bovinae</taxon>
        <taxon>Bos</taxon>
    </lineage>
</organism>
<protein>
    <recommendedName>
        <fullName evidence="2">E3 ubiquitin-protein ligase RNF8</fullName>
        <ecNumber evidence="2">2.3.2.27</ecNumber>
    </recommendedName>
    <alternativeName>
        <fullName evidence="2">RING finger protein 8</fullName>
    </alternativeName>
    <alternativeName>
        <fullName evidence="2">RING-type E3 ubiquitin transferase RNF8</fullName>
    </alternativeName>
</protein>
<gene>
    <name evidence="2" type="primary">RNF8</name>
</gene>